<reference key="1">
    <citation type="journal article" date="2003" name="Nature">
        <title>The genome sequence of the filamentous fungus Neurospora crassa.</title>
        <authorList>
            <person name="Galagan J.E."/>
            <person name="Calvo S.E."/>
            <person name="Borkovich K.A."/>
            <person name="Selker E.U."/>
            <person name="Read N.D."/>
            <person name="Jaffe D.B."/>
            <person name="FitzHugh W."/>
            <person name="Ma L.-J."/>
            <person name="Smirnov S."/>
            <person name="Purcell S."/>
            <person name="Rehman B."/>
            <person name="Elkins T."/>
            <person name="Engels R."/>
            <person name="Wang S."/>
            <person name="Nielsen C.B."/>
            <person name="Butler J."/>
            <person name="Endrizzi M."/>
            <person name="Qui D."/>
            <person name="Ianakiev P."/>
            <person name="Bell-Pedersen D."/>
            <person name="Nelson M.A."/>
            <person name="Werner-Washburne M."/>
            <person name="Selitrennikoff C.P."/>
            <person name="Kinsey J.A."/>
            <person name="Braun E.L."/>
            <person name="Zelter A."/>
            <person name="Schulte U."/>
            <person name="Kothe G.O."/>
            <person name="Jedd G."/>
            <person name="Mewes H.-W."/>
            <person name="Staben C."/>
            <person name="Marcotte E."/>
            <person name="Greenberg D."/>
            <person name="Roy A."/>
            <person name="Foley K."/>
            <person name="Naylor J."/>
            <person name="Stange-Thomann N."/>
            <person name="Barrett R."/>
            <person name="Gnerre S."/>
            <person name="Kamal M."/>
            <person name="Kamvysselis M."/>
            <person name="Mauceli E.W."/>
            <person name="Bielke C."/>
            <person name="Rudd S."/>
            <person name="Frishman D."/>
            <person name="Krystofova S."/>
            <person name="Rasmussen C."/>
            <person name="Metzenberg R.L."/>
            <person name="Perkins D.D."/>
            <person name="Kroken S."/>
            <person name="Cogoni C."/>
            <person name="Macino G."/>
            <person name="Catcheside D.E.A."/>
            <person name="Li W."/>
            <person name="Pratt R.J."/>
            <person name="Osmani S.A."/>
            <person name="DeSouza C.P.C."/>
            <person name="Glass N.L."/>
            <person name="Orbach M.J."/>
            <person name="Berglund J.A."/>
            <person name="Voelker R."/>
            <person name="Yarden O."/>
            <person name="Plamann M."/>
            <person name="Seiler S."/>
            <person name="Dunlap J.C."/>
            <person name="Radford A."/>
            <person name="Aramayo R."/>
            <person name="Natvig D.O."/>
            <person name="Alex L.A."/>
            <person name="Mannhaupt G."/>
            <person name="Ebbole D.J."/>
            <person name="Freitag M."/>
            <person name="Paulsen I."/>
            <person name="Sachs M.S."/>
            <person name="Lander E.S."/>
            <person name="Nusbaum C."/>
            <person name="Birren B.W."/>
        </authorList>
    </citation>
    <scope>NUCLEOTIDE SEQUENCE [LARGE SCALE GENOMIC DNA]</scope>
    <source>
        <strain>ATCC 24698 / 74-OR23-1A / CBS 708.71 / DSM 1257 / FGSC 987</strain>
    </source>
</reference>
<evidence type="ECO:0000250" key="1"/>
<evidence type="ECO:0000255" key="2"/>
<evidence type="ECO:0000255" key="3">
    <source>
        <dbReference type="PROSITE-ProRule" id="PRU00077"/>
    </source>
</evidence>
<evidence type="ECO:0000255" key="4">
    <source>
        <dbReference type="PROSITE-ProRule" id="PRU00448"/>
    </source>
</evidence>
<evidence type="ECO:0000305" key="5"/>
<accession>Q7S9V9</accession>
<organism>
    <name type="scientific">Neurospora crassa (strain ATCC 24698 / 74-OR23-1A / CBS 708.71 / DSM 1257 / FGSC 987)</name>
    <dbReference type="NCBI Taxonomy" id="367110"/>
    <lineage>
        <taxon>Eukaryota</taxon>
        <taxon>Fungi</taxon>
        <taxon>Dikarya</taxon>
        <taxon>Ascomycota</taxon>
        <taxon>Pezizomycotina</taxon>
        <taxon>Sordariomycetes</taxon>
        <taxon>Sordariomycetidae</taxon>
        <taxon>Sordariales</taxon>
        <taxon>Sordariaceae</taxon>
        <taxon>Neurospora</taxon>
    </lineage>
</organism>
<sequence>MPPKIEAQEIETYWNIFSARTNGGKFLTGEQAAPVLKNSGLRDDQLERVWDLADVDNDGNLDFEEFCVAMRVIFDLLNGEYADVPTTLPDWLVPESKAHLVQANRALTGKAPKFEQVEDEDDTPGLKDGFDWYMSPADKSKYEQIYQENRDMRGEVSFAALQDLYDSLSVPDTDIRSAWNLVNPSASSTINKDACLAFLHILNYRHEGFRIPRTVPASLRASFERNKITYNVNDPSQSRWAQKADDETSTGRKAKFGDQYLTRLGRSSFKTAGTDFSSEQTDDQWEEVRLKKQLAELDEKMAKVEEAANRRRGGKRDTKPALVKRELEQLLDYKRKELRDLEEGKGKAAAGGSLKSVADDLATVKEQVEGLEAHLRSRQDVLEQLKREIEEEKVGR</sequence>
<dbReference type="EMBL" id="CM002239">
    <property type="protein sequence ID" value="EAA33145.2"/>
    <property type="molecule type" value="Genomic_DNA"/>
</dbReference>
<dbReference type="RefSeq" id="XP_962381.2">
    <property type="nucleotide sequence ID" value="XM_957288.3"/>
</dbReference>
<dbReference type="FunCoup" id="Q7S9V9">
    <property type="interactions" value="94"/>
</dbReference>
<dbReference type="STRING" id="367110.Q7S9V9"/>
<dbReference type="PaxDb" id="5141-EFNCRP00000006129"/>
<dbReference type="EnsemblFungi" id="EAA33145">
    <property type="protein sequence ID" value="EAA33145"/>
    <property type="gene ID" value="NCU06347"/>
</dbReference>
<dbReference type="GeneID" id="3878520"/>
<dbReference type="KEGG" id="ncr:NCU06347"/>
<dbReference type="VEuPathDB" id="FungiDB:NCU06347"/>
<dbReference type="HOGENOM" id="CLU_040829_0_0_1"/>
<dbReference type="InParanoid" id="Q7S9V9"/>
<dbReference type="OMA" id="DWLIPES"/>
<dbReference type="OrthoDB" id="1716625at2759"/>
<dbReference type="Proteomes" id="UP000001805">
    <property type="component" value="Chromosome 4, Linkage Group IV"/>
</dbReference>
<dbReference type="GO" id="GO:0030479">
    <property type="term" value="C:actin cortical patch"/>
    <property type="evidence" value="ECO:0007669"/>
    <property type="project" value="UniProtKB-SubCell"/>
</dbReference>
<dbReference type="GO" id="GO:0005737">
    <property type="term" value="C:cytoplasm"/>
    <property type="evidence" value="ECO:0000318"/>
    <property type="project" value="GO_Central"/>
</dbReference>
<dbReference type="GO" id="GO:0010008">
    <property type="term" value="C:endosome membrane"/>
    <property type="evidence" value="ECO:0007669"/>
    <property type="project" value="UniProtKB-SubCell"/>
</dbReference>
<dbReference type="GO" id="GO:0005886">
    <property type="term" value="C:plasma membrane"/>
    <property type="evidence" value="ECO:0000318"/>
    <property type="project" value="GO_Central"/>
</dbReference>
<dbReference type="GO" id="GO:0003779">
    <property type="term" value="F:actin binding"/>
    <property type="evidence" value="ECO:0007669"/>
    <property type="project" value="UniProtKB-KW"/>
</dbReference>
<dbReference type="GO" id="GO:0005509">
    <property type="term" value="F:calcium ion binding"/>
    <property type="evidence" value="ECO:0007669"/>
    <property type="project" value="InterPro"/>
</dbReference>
<dbReference type="GO" id="GO:0007015">
    <property type="term" value="P:actin filament organization"/>
    <property type="evidence" value="ECO:0007669"/>
    <property type="project" value="InterPro"/>
</dbReference>
<dbReference type="GO" id="GO:0006897">
    <property type="term" value="P:endocytosis"/>
    <property type="evidence" value="ECO:0000318"/>
    <property type="project" value="GO_Central"/>
</dbReference>
<dbReference type="GO" id="GO:0016197">
    <property type="term" value="P:endosomal transport"/>
    <property type="evidence" value="ECO:0000318"/>
    <property type="project" value="GO_Central"/>
</dbReference>
<dbReference type="CDD" id="cd00052">
    <property type="entry name" value="EH"/>
    <property type="match status" value="1"/>
</dbReference>
<dbReference type="FunFam" id="1.10.238.10:FF:000339">
    <property type="entry name" value="Actin cytoskeleton-regulatory complex protein END3"/>
    <property type="match status" value="1"/>
</dbReference>
<dbReference type="Gene3D" id="1.10.238.10">
    <property type="entry name" value="EF-hand"/>
    <property type="match status" value="2"/>
</dbReference>
<dbReference type="InterPro" id="IPR011992">
    <property type="entry name" value="EF-hand-dom_pair"/>
</dbReference>
<dbReference type="InterPro" id="IPR018247">
    <property type="entry name" value="EF_Hand_1_Ca_BS"/>
</dbReference>
<dbReference type="InterPro" id="IPR002048">
    <property type="entry name" value="EF_hand_dom"/>
</dbReference>
<dbReference type="InterPro" id="IPR000261">
    <property type="entry name" value="EH_dom"/>
</dbReference>
<dbReference type="InterPro" id="IPR025604">
    <property type="entry name" value="End3"/>
</dbReference>
<dbReference type="PANTHER" id="PTHR11216:SF74">
    <property type="entry name" value="ACTIN CYTOSKELETON-REGULATORY COMPLEX PROTEIN END3"/>
    <property type="match status" value="1"/>
</dbReference>
<dbReference type="PANTHER" id="PTHR11216">
    <property type="entry name" value="EH DOMAIN"/>
    <property type="match status" value="1"/>
</dbReference>
<dbReference type="Pfam" id="PF12763">
    <property type="entry name" value="EH"/>
    <property type="match status" value="1"/>
</dbReference>
<dbReference type="Pfam" id="PF12761">
    <property type="entry name" value="End3"/>
    <property type="match status" value="1"/>
</dbReference>
<dbReference type="SMART" id="SM00054">
    <property type="entry name" value="EFh"/>
    <property type="match status" value="1"/>
</dbReference>
<dbReference type="SMART" id="SM00027">
    <property type="entry name" value="EH"/>
    <property type="match status" value="2"/>
</dbReference>
<dbReference type="SUPFAM" id="SSF47473">
    <property type="entry name" value="EF-hand"/>
    <property type="match status" value="2"/>
</dbReference>
<dbReference type="PROSITE" id="PS00018">
    <property type="entry name" value="EF_HAND_1"/>
    <property type="match status" value="1"/>
</dbReference>
<dbReference type="PROSITE" id="PS50222">
    <property type="entry name" value="EF_HAND_2"/>
    <property type="match status" value="1"/>
</dbReference>
<dbReference type="PROSITE" id="PS50031">
    <property type="entry name" value="EH"/>
    <property type="match status" value="2"/>
</dbReference>
<protein>
    <recommendedName>
        <fullName>Actin cytoskeleton-regulatory complex protein end-3</fullName>
    </recommendedName>
    <alternativeName>
        <fullName>Endocytosis protein 3</fullName>
    </alternativeName>
</protein>
<feature type="chain" id="PRO_0000349453" description="Actin cytoskeleton-regulatory complex protein end-3">
    <location>
        <begin position="1"/>
        <end position="396"/>
    </location>
</feature>
<feature type="domain" description="EH 1" evidence="3">
    <location>
        <begin position="9"/>
        <end position="99"/>
    </location>
</feature>
<feature type="domain" description="EF-hand" evidence="4">
    <location>
        <begin position="41"/>
        <end position="76"/>
    </location>
</feature>
<feature type="domain" description="EH 2" evidence="3">
    <location>
        <begin position="138"/>
        <end position="226"/>
    </location>
</feature>
<feature type="coiled-coil region" evidence="2">
    <location>
        <begin position="284"/>
        <end position="395"/>
    </location>
</feature>
<feature type="binding site" evidence="4">
    <location>
        <position position="54"/>
    </location>
    <ligand>
        <name>Ca(2+)</name>
        <dbReference type="ChEBI" id="CHEBI:29108"/>
    </ligand>
</feature>
<feature type="binding site" evidence="4">
    <location>
        <position position="56"/>
    </location>
    <ligand>
        <name>Ca(2+)</name>
        <dbReference type="ChEBI" id="CHEBI:29108"/>
    </ligand>
</feature>
<feature type="binding site" evidence="4">
    <location>
        <position position="58"/>
    </location>
    <ligand>
        <name>Ca(2+)</name>
        <dbReference type="ChEBI" id="CHEBI:29108"/>
    </ligand>
</feature>
<feature type="binding site" evidence="4">
    <location>
        <position position="60"/>
    </location>
    <ligand>
        <name>Ca(2+)</name>
        <dbReference type="ChEBI" id="CHEBI:29108"/>
    </ligand>
</feature>
<feature type="binding site" evidence="4">
    <location>
        <position position="65"/>
    </location>
    <ligand>
        <name>Ca(2+)</name>
        <dbReference type="ChEBI" id="CHEBI:29108"/>
    </ligand>
</feature>
<keyword id="KW-0009">Actin-binding</keyword>
<keyword id="KW-0106">Calcium</keyword>
<keyword id="KW-1003">Cell membrane</keyword>
<keyword id="KW-0175">Coiled coil</keyword>
<keyword id="KW-0963">Cytoplasm</keyword>
<keyword id="KW-0206">Cytoskeleton</keyword>
<keyword id="KW-0254">Endocytosis</keyword>
<keyword id="KW-0967">Endosome</keyword>
<keyword id="KW-0472">Membrane</keyword>
<keyword id="KW-0479">Metal-binding</keyword>
<keyword id="KW-1185">Reference proteome</keyword>
<keyword id="KW-0677">Repeat</keyword>
<proteinExistence type="inferred from homology"/>
<comment type="function">
    <text evidence="1">Component of the PAN1 actin cytoskeleton-regulatory complex required for the internalization of endosomes during actin-coupled endocytosis. The complex links the site of endocytosis to the cell membrane-associated actin cytoskeleton. Mediates uptake of external molecules and vacuolar degradation of plasma membrane proteins. Plays a role in the proper organization of the cell membrane-associated actin cytoskeleton and promotes its destabilization (By similarity).</text>
</comment>
<comment type="subunit">
    <text evidence="1">Component of the PAN1 actin cytoskeleton-regulatory complex.</text>
</comment>
<comment type="subcellular location">
    <subcellularLocation>
        <location evidence="1">Cell membrane</location>
        <topology evidence="1">Peripheral membrane protein</topology>
        <orientation evidence="1">Cytoplasmic side</orientation>
    </subcellularLocation>
    <subcellularLocation>
        <location evidence="1">Endosome membrane</location>
        <topology evidence="1">Peripheral membrane protein</topology>
        <orientation evidence="1">Cytoplasmic side</orientation>
    </subcellularLocation>
    <subcellularLocation>
        <location evidence="1">Cytoplasm</location>
        <location evidence="1">Cytoskeleton</location>
        <location evidence="1">Actin patch</location>
    </subcellularLocation>
    <text evidence="1">Cytoplasmic and cortical actin patches.</text>
</comment>
<comment type="similarity">
    <text evidence="5">Belongs to the END3 family.</text>
</comment>
<name>END3_NEUCR</name>
<gene>
    <name type="primary">end-3</name>
    <name type="ORF">NCU06347</name>
</gene>